<dbReference type="EMBL" id="AK145270">
    <property type="protein sequence ID" value="BAE26337.1"/>
    <property type="molecule type" value="mRNA"/>
</dbReference>
<dbReference type="EMBL" id="AK167251">
    <property type="protein sequence ID" value="BAE39372.1"/>
    <property type="molecule type" value="mRNA"/>
</dbReference>
<dbReference type="EMBL" id="AK167937">
    <property type="protein sequence ID" value="BAE39941.1"/>
    <property type="molecule type" value="mRNA"/>
</dbReference>
<dbReference type="EMBL" id="AK168479">
    <property type="protein sequence ID" value="BAE40368.1"/>
    <property type="molecule type" value="mRNA"/>
</dbReference>
<dbReference type="EMBL" id="BC012435">
    <property type="protein sequence ID" value="AAH12435.1"/>
    <property type="molecule type" value="mRNA"/>
</dbReference>
<dbReference type="EMBL" id="AF003951">
    <property type="protein sequence ID" value="AAB88256.1"/>
    <property type="molecule type" value="mRNA"/>
</dbReference>
<dbReference type="CCDS" id="CCDS23161.1"/>
<dbReference type="RefSeq" id="NP_036169.1">
    <property type="nucleotide sequence ID" value="NM_012039.2"/>
</dbReference>
<dbReference type="SMR" id="O54692"/>
<dbReference type="BioGRID" id="205086">
    <property type="interactions" value="35"/>
</dbReference>
<dbReference type="FunCoup" id="O54692">
    <property type="interactions" value="4297"/>
</dbReference>
<dbReference type="IntAct" id="O54692">
    <property type="interactions" value="19"/>
</dbReference>
<dbReference type="MINT" id="O54692"/>
<dbReference type="STRING" id="10090.ENSMUSP00000034803"/>
<dbReference type="GlyGen" id="O54692">
    <property type="glycosylation" value="2 sites, 1 N-linked glycan (1 site), 1 O-linked glycan (1 site)"/>
</dbReference>
<dbReference type="iPTMnet" id="O54692"/>
<dbReference type="PhosphoSitePlus" id="O54692"/>
<dbReference type="SwissPalm" id="O54692"/>
<dbReference type="jPOST" id="O54692"/>
<dbReference type="PaxDb" id="10090-ENSMUSP00000034803"/>
<dbReference type="PeptideAtlas" id="O54692"/>
<dbReference type="ProteomicsDB" id="275171"/>
<dbReference type="Pumba" id="O54692"/>
<dbReference type="Antibodypedia" id="3162">
    <property type="antibodies" value="169 antibodies from 26 providers"/>
</dbReference>
<dbReference type="DNASU" id="26951"/>
<dbReference type="Ensembl" id="ENSMUST00000034803.10">
    <property type="protein sequence ID" value="ENSMUSP00000034803.9"/>
    <property type="gene ID" value="ENSMUSG00000032264.10"/>
</dbReference>
<dbReference type="GeneID" id="26951"/>
<dbReference type="KEGG" id="mmu:26951"/>
<dbReference type="UCSC" id="uc009piu.2">
    <property type="organism name" value="mouse"/>
</dbReference>
<dbReference type="AGR" id="MGI:1349478"/>
<dbReference type="CTD" id="9183"/>
<dbReference type="MGI" id="MGI:1349478">
    <property type="gene designation" value="Zw10"/>
</dbReference>
<dbReference type="VEuPathDB" id="HostDB:ENSMUSG00000032264"/>
<dbReference type="eggNOG" id="KOG2163">
    <property type="taxonomic scope" value="Eukaryota"/>
</dbReference>
<dbReference type="GeneTree" id="ENSGT00390000016427"/>
<dbReference type="HOGENOM" id="CLU_012948_0_0_1"/>
<dbReference type="InParanoid" id="O54692"/>
<dbReference type="OMA" id="HHLLTMG"/>
<dbReference type="OrthoDB" id="534815at2759"/>
<dbReference type="PhylomeDB" id="O54692"/>
<dbReference type="TreeFam" id="TF105966"/>
<dbReference type="Reactome" id="R-MMU-141444">
    <property type="pathway name" value="Amplification of signal from unattached kinetochores via a MAD2 inhibitory signal"/>
</dbReference>
<dbReference type="Reactome" id="R-MMU-2467813">
    <property type="pathway name" value="Separation of Sister Chromatids"/>
</dbReference>
<dbReference type="Reactome" id="R-MMU-2500257">
    <property type="pathway name" value="Resolution of Sister Chromatid Cohesion"/>
</dbReference>
<dbReference type="Reactome" id="R-MMU-5663220">
    <property type="pathway name" value="RHO GTPases Activate Formins"/>
</dbReference>
<dbReference type="Reactome" id="R-MMU-6811434">
    <property type="pathway name" value="COPI-dependent Golgi-to-ER retrograde traffic"/>
</dbReference>
<dbReference type="Reactome" id="R-MMU-68877">
    <property type="pathway name" value="Mitotic Prometaphase"/>
</dbReference>
<dbReference type="Reactome" id="R-MMU-9648025">
    <property type="pathway name" value="EML4 and NUDC in mitotic spindle formation"/>
</dbReference>
<dbReference type="BioGRID-ORCS" id="26951">
    <property type="hits" value="13 hits in 77 CRISPR screens"/>
</dbReference>
<dbReference type="ChiTaRS" id="Zw10">
    <property type="organism name" value="mouse"/>
</dbReference>
<dbReference type="PRO" id="PR:O54692"/>
<dbReference type="Proteomes" id="UP000000589">
    <property type="component" value="Chromosome 9"/>
</dbReference>
<dbReference type="RNAct" id="O54692">
    <property type="molecule type" value="protein"/>
</dbReference>
<dbReference type="Bgee" id="ENSMUSG00000032264">
    <property type="expression patterns" value="Expressed in gastrula and 255 other cell types or tissues"/>
</dbReference>
<dbReference type="ExpressionAtlas" id="O54692">
    <property type="expression patterns" value="baseline and differential"/>
</dbReference>
<dbReference type="GO" id="GO:0005829">
    <property type="term" value="C:cytosol"/>
    <property type="evidence" value="ECO:0007669"/>
    <property type="project" value="Ensembl"/>
</dbReference>
<dbReference type="GO" id="GO:0070939">
    <property type="term" value="C:Dsl1/NZR complex"/>
    <property type="evidence" value="ECO:0007669"/>
    <property type="project" value="Ensembl"/>
</dbReference>
<dbReference type="GO" id="GO:0005783">
    <property type="term" value="C:endoplasmic reticulum"/>
    <property type="evidence" value="ECO:0000250"/>
    <property type="project" value="HGNC-UCL"/>
</dbReference>
<dbReference type="GO" id="GO:0005789">
    <property type="term" value="C:endoplasmic reticulum membrane"/>
    <property type="evidence" value="ECO:0007669"/>
    <property type="project" value="UniProtKB-SubCell"/>
</dbReference>
<dbReference type="GO" id="GO:0000776">
    <property type="term" value="C:kinetochore"/>
    <property type="evidence" value="ECO:0000250"/>
    <property type="project" value="HGNC-UCL"/>
</dbReference>
<dbReference type="GO" id="GO:0005828">
    <property type="term" value="C:kinetochore microtubule"/>
    <property type="evidence" value="ECO:0000250"/>
    <property type="project" value="HGNC-UCL"/>
</dbReference>
<dbReference type="GO" id="GO:0005811">
    <property type="term" value="C:lipid droplet"/>
    <property type="evidence" value="ECO:0000250"/>
    <property type="project" value="UniProtKB"/>
</dbReference>
<dbReference type="GO" id="GO:0005634">
    <property type="term" value="C:nucleus"/>
    <property type="evidence" value="ECO:0000250"/>
    <property type="project" value="HGNC-UCL"/>
</dbReference>
<dbReference type="GO" id="GO:1990423">
    <property type="term" value="C:RZZ complex"/>
    <property type="evidence" value="ECO:0007669"/>
    <property type="project" value="Ensembl"/>
</dbReference>
<dbReference type="GO" id="GO:0000922">
    <property type="term" value="C:spindle pole"/>
    <property type="evidence" value="ECO:0000250"/>
    <property type="project" value="HGNC-UCL"/>
</dbReference>
<dbReference type="GO" id="GO:0051301">
    <property type="term" value="P:cell division"/>
    <property type="evidence" value="ECO:0007669"/>
    <property type="project" value="UniProtKB-KW"/>
</dbReference>
<dbReference type="GO" id="GO:0006888">
    <property type="term" value="P:endoplasmic reticulum to Golgi vesicle-mediated transport"/>
    <property type="evidence" value="ECO:0000250"/>
    <property type="project" value="HGNC-UCL"/>
</dbReference>
<dbReference type="GO" id="GO:0000132">
    <property type="term" value="P:establishment of mitotic spindle orientation"/>
    <property type="evidence" value="ECO:0007669"/>
    <property type="project" value="Ensembl"/>
</dbReference>
<dbReference type="GO" id="GO:0007030">
    <property type="term" value="P:Golgi organization"/>
    <property type="evidence" value="ECO:0007669"/>
    <property type="project" value="Ensembl"/>
</dbReference>
<dbReference type="GO" id="GO:0007080">
    <property type="term" value="P:mitotic metaphase chromosome alignment"/>
    <property type="evidence" value="ECO:0007669"/>
    <property type="project" value="Ensembl"/>
</dbReference>
<dbReference type="GO" id="GO:0000070">
    <property type="term" value="P:mitotic sister chromatid segregation"/>
    <property type="evidence" value="ECO:0000250"/>
    <property type="project" value="HGNC-UCL"/>
</dbReference>
<dbReference type="GO" id="GO:0007094">
    <property type="term" value="P:mitotic spindle assembly checkpoint signaling"/>
    <property type="evidence" value="ECO:0000250"/>
    <property type="project" value="HGNC-UCL"/>
</dbReference>
<dbReference type="GO" id="GO:0034501">
    <property type="term" value="P:protein localization to kinetochore"/>
    <property type="evidence" value="ECO:0007669"/>
    <property type="project" value="Ensembl"/>
</dbReference>
<dbReference type="GO" id="GO:0015031">
    <property type="term" value="P:protein transport"/>
    <property type="evidence" value="ECO:0007669"/>
    <property type="project" value="UniProtKB-KW"/>
</dbReference>
<dbReference type="GO" id="GO:0065003">
    <property type="term" value="P:protein-containing complex assembly"/>
    <property type="evidence" value="ECO:0000250"/>
    <property type="project" value="HGNC-UCL"/>
</dbReference>
<dbReference type="GO" id="GO:0007096">
    <property type="term" value="P:regulation of exit from mitosis"/>
    <property type="evidence" value="ECO:0000250"/>
    <property type="project" value="HGNC-UCL"/>
</dbReference>
<dbReference type="FunFam" id="1.10.357.150:FF:000001">
    <property type="entry name" value="centromere/kinetochore protein zw10 homolog"/>
    <property type="match status" value="1"/>
</dbReference>
<dbReference type="Gene3D" id="1.10.357.150">
    <property type="match status" value="1"/>
</dbReference>
<dbReference type="InterPro" id="IPR046362">
    <property type="entry name" value="Zw10/DSL1_C_sf"/>
</dbReference>
<dbReference type="InterPro" id="IPR048343">
    <property type="entry name" value="ZW10_C"/>
</dbReference>
<dbReference type="InterPro" id="IPR055148">
    <property type="entry name" value="ZW10_C_2"/>
</dbReference>
<dbReference type="InterPro" id="IPR048344">
    <property type="entry name" value="Zw10_middle"/>
</dbReference>
<dbReference type="InterPro" id="IPR009361">
    <property type="entry name" value="Zw10_N"/>
</dbReference>
<dbReference type="PANTHER" id="PTHR12205">
    <property type="entry name" value="CENTROMERE/KINETOCHORE PROTEIN ZW10"/>
    <property type="match status" value="1"/>
</dbReference>
<dbReference type="PANTHER" id="PTHR12205:SF0">
    <property type="entry name" value="CENTROMERE_KINETOCHORE PROTEIN ZW10 HOMOLOG"/>
    <property type="match status" value="1"/>
</dbReference>
<dbReference type="Pfam" id="PF20666">
    <property type="entry name" value="ZW10_C"/>
    <property type="match status" value="1"/>
</dbReference>
<dbReference type="Pfam" id="PF22766">
    <property type="entry name" value="ZW10_C2"/>
    <property type="match status" value="1"/>
</dbReference>
<dbReference type="Pfam" id="PF20665">
    <property type="entry name" value="Zw10_middle"/>
    <property type="match status" value="1"/>
</dbReference>
<dbReference type="Pfam" id="PF06248">
    <property type="entry name" value="Zw10_N"/>
    <property type="match status" value="1"/>
</dbReference>
<organism>
    <name type="scientific">Mus musculus</name>
    <name type="common">Mouse</name>
    <dbReference type="NCBI Taxonomy" id="10090"/>
    <lineage>
        <taxon>Eukaryota</taxon>
        <taxon>Metazoa</taxon>
        <taxon>Chordata</taxon>
        <taxon>Craniata</taxon>
        <taxon>Vertebrata</taxon>
        <taxon>Euteleostomi</taxon>
        <taxon>Mammalia</taxon>
        <taxon>Eutheria</taxon>
        <taxon>Euarchontoglires</taxon>
        <taxon>Glires</taxon>
        <taxon>Rodentia</taxon>
        <taxon>Myomorpha</taxon>
        <taxon>Muroidea</taxon>
        <taxon>Muridae</taxon>
        <taxon>Murinae</taxon>
        <taxon>Mus</taxon>
        <taxon>Mus</taxon>
    </lineage>
</organism>
<gene>
    <name type="primary">Zw10</name>
</gene>
<accession>O54692</accession>
<accession>Q3TIA5</accession>
<accession>Q3ULW1</accession>
<accession>Q921H3</accession>
<keyword id="KW-0007">Acetylation</keyword>
<keyword id="KW-0131">Cell cycle</keyword>
<keyword id="KW-0132">Cell division</keyword>
<keyword id="KW-0137">Centromere</keyword>
<keyword id="KW-0158">Chromosome</keyword>
<keyword id="KW-0175">Coiled coil</keyword>
<keyword id="KW-0963">Cytoplasm</keyword>
<keyword id="KW-0206">Cytoskeleton</keyword>
<keyword id="KW-0256">Endoplasmic reticulum</keyword>
<keyword id="KW-0931">ER-Golgi transport</keyword>
<keyword id="KW-0995">Kinetochore</keyword>
<keyword id="KW-0551">Lipid droplet</keyword>
<keyword id="KW-0472">Membrane</keyword>
<keyword id="KW-0498">Mitosis</keyword>
<keyword id="KW-0597">Phosphoprotein</keyword>
<keyword id="KW-0653">Protein transport</keyword>
<keyword id="KW-1185">Reference proteome</keyword>
<keyword id="KW-0813">Transport</keyword>
<evidence type="ECO:0000250" key="1">
    <source>
        <dbReference type="UniProtKB" id="O43264"/>
    </source>
</evidence>
<evidence type="ECO:0000255" key="2"/>
<evidence type="ECO:0000305" key="3"/>
<comment type="function">
    <text evidence="1">Essential component of the mitotic checkpoint, which prevents cells from prematurely exiting mitosis. Required for the assembly of the dynein-dynactin and MAD1-MAD2 complexes onto kinetochores. Its function related to the spindle assembly machinery is proposed to depend on its association in the mitotic RZZ complex. Involved in regulation of membrane traffic between the Golgi and the endoplasmic reticulum (ER); the function is proposed to depend on its association in the interphase NRZ complex which is believed to play a role in SNARE assembly at the ER (By similarity).</text>
</comment>
<comment type="subunit">
    <text evidence="1">Interacts with NBAS and KNTC1/ROD; the interactions are mutually exclusive and indicative for its association in two different vesicle tethering complexes (By similarity). Component of the RZZ complex composed of KNTC1/ROD, ZW10 and ZWILCH (By similarity). Component of the NRZ complex composed of NBAS, ZW10 and RINT1/TIP20L; NRZ associates with SNAREs STX18, USE1L, BNIP1/SEC20L and SEC22B (the assembly has been described as syntaxin 18 complex) (By similarity). Interacts directly with RINT1/TIP20L bound to BNIP1/SEC20L (By similarity). Interacts with C19orf25 and ZWINT (By similarity). Interacts with ZFYVE1 (By similarity). Interacts with RAB18 and this interaction is enhanced in the presence of ZFYVE1 (By similarity).</text>
</comment>
<comment type="subcellular location">
    <subcellularLocation>
        <location evidence="1">Cytoplasm</location>
    </subcellularLocation>
    <subcellularLocation>
        <location evidence="1">Endoplasmic reticulum membrane</location>
        <topology evidence="1">Peripheral membrane protein</topology>
    </subcellularLocation>
    <subcellularLocation>
        <location evidence="1">Chromosome</location>
        <location evidence="1">Centromere</location>
        <location evidence="1">Kinetochore</location>
    </subcellularLocation>
    <subcellularLocation>
        <location evidence="1">Cytoplasm</location>
        <location evidence="1">Cytoskeleton</location>
        <location evidence="1">Spindle</location>
    </subcellularLocation>
    <subcellularLocation>
        <location evidence="1">Lipid droplet</location>
    </subcellularLocation>
    <text evidence="1">Dynamic pattern of localization during the cell cycle. In most cells at interphase, present diffusely in the cytoplasm. In prometaphase, associated with the kinetochore. At metaphase, detected both at the kinetochores and, most prominently, at the spindle, particularly at the spindle poles. In very early anaphase, detected on segregating kinetochores. In late anaphase and telophase, accumulates at the spindle midzone.</text>
</comment>
<comment type="similarity">
    <text evidence="3">Belongs to the ZW10 family.</text>
</comment>
<feature type="initiator methionine" description="Removed" evidence="1">
    <location>
        <position position="1"/>
    </location>
</feature>
<feature type="chain" id="PRO_0000184958" description="Centromere/kinetochore protein zw10 homolog">
    <location>
        <begin position="2"/>
        <end position="779"/>
    </location>
</feature>
<feature type="region of interest" description="Interaction with RINT1" evidence="1">
    <location>
        <begin position="2"/>
        <end position="317"/>
    </location>
</feature>
<feature type="region of interest" description="Interaction with ZWINT" evidence="1">
    <location>
        <begin position="2"/>
        <end position="81"/>
    </location>
</feature>
<feature type="coiled-coil region" evidence="2">
    <location>
        <begin position="14"/>
        <end position="130"/>
    </location>
</feature>
<feature type="modified residue" description="N-acetylalanine" evidence="1">
    <location>
        <position position="2"/>
    </location>
</feature>
<feature type="modified residue" description="Phosphoserine" evidence="1">
    <location>
        <position position="3"/>
    </location>
</feature>
<feature type="modified residue" description="Phosphoserine" evidence="1">
    <location>
        <position position="12"/>
    </location>
</feature>
<feature type="modified residue" description="N6-acetyllysine" evidence="1">
    <location>
        <position position="777"/>
    </location>
</feature>
<feature type="sequence conflict" description="In Ref. 1; BAE26337." evidence="3" ref="1">
    <original>E</original>
    <variation>A</variation>
    <location>
        <position position="143"/>
    </location>
</feature>
<feature type="sequence conflict" description="In Ref. 1; BAE26337/BAE39941." evidence="3" ref="1">
    <original>T</original>
    <variation>A</variation>
    <location>
        <position position="281"/>
    </location>
</feature>
<feature type="sequence conflict" description="In Ref. 1; BAE39941." evidence="3" ref="1">
    <original>A</original>
    <variation>T</variation>
    <location>
        <position position="292"/>
    </location>
</feature>
<feature type="sequence conflict" description="In Ref. 1; BAE26337." evidence="3" ref="1">
    <original>T</original>
    <variation>K</variation>
    <location>
        <position position="449"/>
    </location>
</feature>
<protein>
    <recommendedName>
        <fullName>Centromere/kinetochore protein zw10 homolog</fullName>
    </recommendedName>
</protein>
<proteinExistence type="evidence at protein level"/>
<sequence>MASFVTEVLAHSGSLEKEDLGTRISRLTRRVEEIKGEVCNMISKKYSEFLPTMQSAQALVTQVDTLSNDIDQLKSRIETEVCRDLHISTVEFTNLKQQLERDSVVLTLLKQLQEFSSAIEEYNSALAEKKYIPAARHLEEAQECLKLLKSRKCFDLKMLKSLSMELTVQKQNILYHLGEDWQKLVVWKFPPAKDTSSLESCLQTELHLCTEQPEKEDMTPLPSISSVLLAFSILGELPTKLKSFGQMLLKYILKPLVTCPSLHAVIERQPSSVSICFESLTTDLEHPSPPEAFAKIRLVLEVLQKQLLDLPLDADLEIGKVPGIVLAEMLGEGIWEDLSECLIRNCLVYSIPTNSSKLQEYEEIIQSTEEFEKFLKEMRFLKGDTTDLLKYARNINSHFANKKCQDVIVAARNLMTSEIHNTVKIGPDCKEALPDLPSPDADHKLQVQTVCKAQFTDAGNLEPETSLDPQSFSLPTCRISEAVKKLMELAYQTLLEATTSSDQCAVQLFYSVRNIFHLFHDVVPTYHKENLRKLPQLAAIHHNNCMYIAHHLLTLGHQFRLRLAPILCDGTTTFVDLVPGFRRLGTECFLAQMQAQKGELLERLSSARSFANMDDEENYSAASKAVRQVLHQLRRLGIVWQDVLPVNIYCKAMGTLLNTAIAEMMSRITALEDISTEDGDRLYSLCKTVMDEGPQVFAPLSDENKNKKYQEEVPVYVSKWMPFKELMIMLQASLQEIGDRWADGKGPLATAFPSSEVKALIRALFQNTERRAAALAKIK</sequence>
<reference key="1">
    <citation type="journal article" date="2005" name="Science">
        <title>The transcriptional landscape of the mammalian genome.</title>
        <authorList>
            <person name="Carninci P."/>
            <person name="Kasukawa T."/>
            <person name="Katayama S."/>
            <person name="Gough J."/>
            <person name="Frith M.C."/>
            <person name="Maeda N."/>
            <person name="Oyama R."/>
            <person name="Ravasi T."/>
            <person name="Lenhard B."/>
            <person name="Wells C."/>
            <person name="Kodzius R."/>
            <person name="Shimokawa K."/>
            <person name="Bajic V.B."/>
            <person name="Brenner S.E."/>
            <person name="Batalov S."/>
            <person name="Forrest A.R."/>
            <person name="Zavolan M."/>
            <person name="Davis M.J."/>
            <person name="Wilming L.G."/>
            <person name="Aidinis V."/>
            <person name="Allen J.E."/>
            <person name="Ambesi-Impiombato A."/>
            <person name="Apweiler R."/>
            <person name="Aturaliya R.N."/>
            <person name="Bailey T.L."/>
            <person name="Bansal M."/>
            <person name="Baxter L."/>
            <person name="Beisel K.W."/>
            <person name="Bersano T."/>
            <person name="Bono H."/>
            <person name="Chalk A.M."/>
            <person name="Chiu K.P."/>
            <person name="Choudhary V."/>
            <person name="Christoffels A."/>
            <person name="Clutterbuck D.R."/>
            <person name="Crowe M.L."/>
            <person name="Dalla E."/>
            <person name="Dalrymple B.P."/>
            <person name="de Bono B."/>
            <person name="Della Gatta G."/>
            <person name="di Bernardo D."/>
            <person name="Down T."/>
            <person name="Engstrom P."/>
            <person name="Fagiolini M."/>
            <person name="Faulkner G."/>
            <person name="Fletcher C.F."/>
            <person name="Fukushima T."/>
            <person name="Furuno M."/>
            <person name="Futaki S."/>
            <person name="Gariboldi M."/>
            <person name="Georgii-Hemming P."/>
            <person name="Gingeras T.R."/>
            <person name="Gojobori T."/>
            <person name="Green R.E."/>
            <person name="Gustincich S."/>
            <person name="Harbers M."/>
            <person name="Hayashi Y."/>
            <person name="Hensch T.K."/>
            <person name="Hirokawa N."/>
            <person name="Hill D."/>
            <person name="Huminiecki L."/>
            <person name="Iacono M."/>
            <person name="Ikeo K."/>
            <person name="Iwama A."/>
            <person name="Ishikawa T."/>
            <person name="Jakt M."/>
            <person name="Kanapin A."/>
            <person name="Katoh M."/>
            <person name="Kawasawa Y."/>
            <person name="Kelso J."/>
            <person name="Kitamura H."/>
            <person name="Kitano H."/>
            <person name="Kollias G."/>
            <person name="Krishnan S.P."/>
            <person name="Kruger A."/>
            <person name="Kummerfeld S.K."/>
            <person name="Kurochkin I.V."/>
            <person name="Lareau L.F."/>
            <person name="Lazarevic D."/>
            <person name="Lipovich L."/>
            <person name="Liu J."/>
            <person name="Liuni S."/>
            <person name="McWilliam S."/>
            <person name="Madan Babu M."/>
            <person name="Madera M."/>
            <person name="Marchionni L."/>
            <person name="Matsuda H."/>
            <person name="Matsuzawa S."/>
            <person name="Miki H."/>
            <person name="Mignone F."/>
            <person name="Miyake S."/>
            <person name="Morris K."/>
            <person name="Mottagui-Tabar S."/>
            <person name="Mulder N."/>
            <person name="Nakano N."/>
            <person name="Nakauchi H."/>
            <person name="Ng P."/>
            <person name="Nilsson R."/>
            <person name="Nishiguchi S."/>
            <person name="Nishikawa S."/>
            <person name="Nori F."/>
            <person name="Ohara O."/>
            <person name="Okazaki Y."/>
            <person name="Orlando V."/>
            <person name="Pang K.C."/>
            <person name="Pavan W.J."/>
            <person name="Pavesi G."/>
            <person name="Pesole G."/>
            <person name="Petrovsky N."/>
            <person name="Piazza S."/>
            <person name="Reed J."/>
            <person name="Reid J.F."/>
            <person name="Ring B.Z."/>
            <person name="Ringwald M."/>
            <person name="Rost B."/>
            <person name="Ruan Y."/>
            <person name="Salzberg S.L."/>
            <person name="Sandelin A."/>
            <person name="Schneider C."/>
            <person name="Schoenbach C."/>
            <person name="Sekiguchi K."/>
            <person name="Semple C.A."/>
            <person name="Seno S."/>
            <person name="Sessa L."/>
            <person name="Sheng Y."/>
            <person name="Shibata Y."/>
            <person name="Shimada H."/>
            <person name="Shimada K."/>
            <person name="Silva D."/>
            <person name="Sinclair B."/>
            <person name="Sperling S."/>
            <person name="Stupka E."/>
            <person name="Sugiura K."/>
            <person name="Sultana R."/>
            <person name="Takenaka Y."/>
            <person name="Taki K."/>
            <person name="Tammoja K."/>
            <person name="Tan S.L."/>
            <person name="Tang S."/>
            <person name="Taylor M.S."/>
            <person name="Tegner J."/>
            <person name="Teichmann S.A."/>
            <person name="Ueda H.R."/>
            <person name="van Nimwegen E."/>
            <person name="Verardo R."/>
            <person name="Wei C.L."/>
            <person name="Yagi K."/>
            <person name="Yamanishi H."/>
            <person name="Zabarovsky E."/>
            <person name="Zhu S."/>
            <person name="Zimmer A."/>
            <person name="Hide W."/>
            <person name="Bult C."/>
            <person name="Grimmond S.M."/>
            <person name="Teasdale R.D."/>
            <person name="Liu E.T."/>
            <person name="Brusic V."/>
            <person name="Quackenbush J."/>
            <person name="Wahlestedt C."/>
            <person name="Mattick J.S."/>
            <person name="Hume D.A."/>
            <person name="Kai C."/>
            <person name="Sasaki D."/>
            <person name="Tomaru Y."/>
            <person name="Fukuda S."/>
            <person name="Kanamori-Katayama M."/>
            <person name="Suzuki M."/>
            <person name="Aoki J."/>
            <person name="Arakawa T."/>
            <person name="Iida J."/>
            <person name="Imamura K."/>
            <person name="Itoh M."/>
            <person name="Kato T."/>
            <person name="Kawaji H."/>
            <person name="Kawagashira N."/>
            <person name="Kawashima T."/>
            <person name="Kojima M."/>
            <person name="Kondo S."/>
            <person name="Konno H."/>
            <person name="Nakano K."/>
            <person name="Ninomiya N."/>
            <person name="Nishio T."/>
            <person name="Okada M."/>
            <person name="Plessy C."/>
            <person name="Shibata K."/>
            <person name="Shiraki T."/>
            <person name="Suzuki S."/>
            <person name="Tagami M."/>
            <person name="Waki K."/>
            <person name="Watahiki A."/>
            <person name="Okamura-Oho Y."/>
            <person name="Suzuki H."/>
            <person name="Kawai J."/>
            <person name="Hayashizaki Y."/>
        </authorList>
    </citation>
    <scope>NUCLEOTIDE SEQUENCE [LARGE SCALE MRNA]</scope>
    <source>
        <strain>C57BL/6J</strain>
        <strain>DBA/2J</strain>
        <tissue>Kidney</tissue>
        <tissue>Mammary gland</tissue>
    </source>
</reference>
<reference key="2">
    <citation type="journal article" date="2004" name="Genome Res.">
        <title>The status, quality, and expansion of the NIH full-length cDNA project: the Mammalian Gene Collection (MGC).</title>
        <authorList>
            <consortium name="The MGC Project Team"/>
        </authorList>
    </citation>
    <scope>NUCLEOTIDE SEQUENCE [LARGE SCALE MRNA]</scope>
    <source>
        <strain>FVB/N</strain>
        <tissue>Mammary gland</tissue>
    </source>
</reference>
<reference key="3">
    <citation type="journal article" date="1997" name="J. Cell Biol.">
        <title>Conservation of the centromere/kinetochore protein ZW10.</title>
        <authorList>
            <person name="Starr D.A."/>
            <person name="Williams B.C."/>
            <person name="Li Z."/>
            <person name="Etemad-Moghadam B."/>
            <person name="Dawe R.K."/>
            <person name="Goldberg M.L."/>
        </authorList>
    </citation>
    <scope>NUCLEOTIDE SEQUENCE [MRNA] OF 522-779</scope>
</reference>
<reference key="4">
    <citation type="journal article" date="2010" name="Cell">
        <title>A tissue-specific atlas of mouse protein phosphorylation and expression.</title>
        <authorList>
            <person name="Huttlin E.L."/>
            <person name="Jedrychowski M.P."/>
            <person name="Elias J.E."/>
            <person name="Goswami T."/>
            <person name="Rad R."/>
            <person name="Beausoleil S.A."/>
            <person name="Villen J."/>
            <person name="Haas W."/>
            <person name="Sowa M.E."/>
            <person name="Gygi S.P."/>
        </authorList>
    </citation>
    <scope>IDENTIFICATION BY MASS SPECTROMETRY [LARGE SCALE ANALYSIS]</scope>
    <source>
        <tissue>Brain</tissue>
        <tissue>Heart</tissue>
        <tissue>Kidney</tissue>
        <tissue>Liver</tissue>
        <tissue>Lung</tissue>
        <tissue>Pancreas</tissue>
        <tissue>Spleen</tissue>
        <tissue>Testis</tissue>
    </source>
</reference>
<name>ZW10_MOUSE</name>